<dbReference type="EMBL" id="CP000438">
    <property type="protein sequence ID" value="ABJ10351.1"/>
    <property type="molecule type" value="Genomic_DNA"/>
</dbReference>
<dbReference type="SMR" id="Q02J03"/>
<dbReference type="KEGG" id="pau:PA14_49130"/>
<dbReference type="PseudoCAP" id="PA14_49130"/>
<dbReference type="HOGENOM" id="CLU_019375_7_0_6"/>
<dbReference type="BioCyc" id="PAER208963:G1G74-4125-MONOMER"/>
<dbReference type="Proteomes" id="UP000000653">
    <property type="component" value="Chromosome"/>
</dbReference>
<dbReference type="GO" id="GO:0005886">
    <property type="term" value="C:plasma membrane"/>
    <property type="evidence" value="ECO:0007669"/>
    <property type="project" value="UniProtKB-SubCell"/>
</dbReference>
<dbReference type="GO" id="GO:0015138">
    <property type="term" value="F:fumarate transmembrane transporter activity"/>
    <property type="evidence" value="ECO:0007669"/>
    <property type="project" value="TreeGrafter"/>
</dbReference>
<dbReference type="GO" id="GO:0015366">
    <property type="term" value="F:malate:proton symporter activity"/>
    <property type="evidence" value="ECO:0007669"/>
    <property type="project" value="TreeGrafter"/>
</dbReference>
<dbReference type="GO" id="GO:0015141">
    <property type="term" value="F:succinate transmembrane transporter activity"/>
    <property type="evidence" value="ECO:0007669"/>
    <property type="project" value="TreeGrafter"/>
</dbReference>
<dbReference type="GO" id="GO:0070778">
    <property type="term" value="P:L-aspartate transmembrane transport"/>
    <property type="evidence" value="ECO:0007669"/>
    <property type="project" value="TreeGrafter"/>
</dbReference>
<dbReference type="FunFam" id="1.10.3860.10:FF:000001">
    <property type="entry name" value="C4-dicarboxylate transport protein"/>
    <property type="match status" value="1"/>
</dbReference>
<dbReference type="Gene3D" id="1.10.3860.10">
    <property type="entry name" value="Sodium:dicarboxylate symporter"/>
    <property type="match status" value="1"/>
</dbReference>
<dbReference type="HAMAP" id="MF_01300">
    <property type="entry name" value="C4_dicarb_transport"/>
    <property type="match status" value="1"/>
</dbReference>
<dbReference type="InterPro" id="IPR023954">
    <property type="entry name" value="C4_dicarb_transport"/>
</dbReference>
<dbReference type="InterPro" id="IPR001991">
    <property type="entry name" value="Na-dicarboxylate_symporter"/>
</dbReference>
<dbReference type="InterPro" id="IPR018107">
    <property type="entry name" value="Na-dicarboxylate_symporter_CS"/>
</dbReference>
<dbReference type="InterPro" id="IPR036458">
    <property type="entry name" value="Na:dicarbo_symporter_sf"/>
</dbReference>
<dbReference type="NCBIfam" id="NF002461">
    <property type="entry name" value="PRK01663.1"/>
    <property type="match status" value="1"/>
</dbReference>
<dbReference type="NCBIfam" id="NF009587">
    <property type="entry name" value="PRK13027.1"/>
    <property type="match status" value="1"/>
</dbReference>
<dbReference type="PANTHER" id="PTHR42865:SF1">
    <property type="entry name" value="AEROBIC C4-DICARBOXYLATE TRANSPORT PROTEIN"/>
    <property type="match status" value="1"/>
</dbReference>
<dbReference type="PANTHER" id="PTHR42865">
    <property type="entry name" value="PROTON/GLUTAMATE-ASPARTATE SYMPORTER"/>
    <property type="match status" value="1"/>
</dbReference>
<dbReference type="Pfam" id="PF00375">
    <property type="entry name" value="SDF"/>
    <property type="match status" value="1"/>
</dbReference>
<dbReference type="PRINTS" id="PR00173">
    <property type="entry name" value="EDTRNSPORT"/>
</dbReference>
<dbReference type="SUPFAM" id="SSF118215">
    <property type="entry name" value="Proton glutamate symport protein"/>
    <property type="match status" value="1"/>
</dbReference>
<dbReference type="PROSITE" id="PS00714">
    <property type="entry name" value="NA_DICARBOXYL_SYMP_2"/>
    <property type="match status" value="1"/>
</dbReference>
<name>DCTA2_PSEAB</name>
<reference key="1">
    <citation type="journal article" date="2006" name="Genome Biol.">
        <title>Genomic analysis reveals that Pseudomonas aeruginosa virulence is combinatorial.</title>
        <authorList>
            <person name="Lee D.G."/>
            <person name="Urbach J.M."/>
            <person name="Wu G."/>
            <person name="Liberati N.T."/>
            <person name="Feinbaum R.L."/>
            <person name="Miyata S."/>
            <person name="Diggins L.T."/>
            <person name="He J."/>
            <person name="Saucier M."/>
            <person name="Deziel E."/>
            <person name="Friedman L."/>
            <person name="Li L."/>
            <person name="Grills G."/>
            <person name="Montgomery K."/>
            <person name="Kucherlapati R."/>
            <person name="Rahme L.G."/>
            <person name="Ausubel F.M."/>
        </authorList>
    </citation>
    <scope>NUCLEOTIDE SEQUENCE [LARGE SCALE GENOMIC DNA]</scope>
    <source>
        <strain>UCBPP-PA14</strain>
    </source>
</reference>
<organism>
    <name type="scientific">Pseudomonas aeruginosa (strain UCBPP-PA14)</name>
    <dbReference type="NCBI Taxonomy" id="208963"/>
    <lineage>
        <taxon>Bacteria</taxon>
        <taxon>Pseudomonadati</taxon>
        <taxon>Pseudomonadota</taxon>
        <taxon>Gammaproteobacteria</taxon>
        <taxon>Pseudomonadales</taxon>
        <taxon>Pseudomonadaceae</taxon>
        <taxon>Pseudomonas</taxon>
    </lineage>
</organism>
<accession>Q02J03</accession>
<feature type="chain" id="PRO_0000321993" description="C4-dicarboxylate transport protein 2">
    <location>
        <begin position="1"/>
        <end position="436"/>
    </location>
</feature>
<feature type="transmembrane region" description="Helical" evidence="1">
    <location>
        <begin position="14"/>
        <end position="34"/>
    </location>
</feature>
<feature type="transmembrane region" description="Helical" evidence="1">
    <location>
        <begin position="45"/>
        <end position="65"/>
    </location>
</feature>
<feature type="transmembrane region" description="Helical" evidence="1">
    <location>
        <begin position="77"/>
        <end position="97"/>
    </location>
</feature>
<feature type="transmembrane region" description="Helical" evidence="1">
    <location>
        <begin position="142"/>
        <end position="162"/>
    </location>
</feature>
<feature type="transmembrane region" description="Helical" evidence="1">
    <location>
        <begin position="198"/>
        <end position="218"/>
    </location>
</feature>
<feature type="transmembrane region" description="Helical" evidence="1">
    <location>
        <begin position="223"/>
        <end position="243"/>
    </location>
</feature>
<feature type="transmembrane region" description="Helical" evidence="1">
    <location>
        <begin position="290"/>
        <end position="310"/>
    </location>
</feature>
<feature type="transmembrane region" description="Helical" evidence="1">
    <location>
        <begin position="331"/>
        <end position="351"/>
    </location>
</feature>
<feature type="transmembrane region" description="Helical" evidence="1">
    <location>
        <begin position="353"/>
        <end position="373"/>
    </location>
</feature>
<feature type="region of interest" description="Disordered" evidence="2">
    <location>
        <begin position="414"/>
        <end position="436"/>
    </location>
</feature>
<keyword id="KW-0997">Cell inner membrane</keyword>
<keyword id="KW-1003">Cell membrane</keyword>
<keyword id="KW-0472">Membrane</keyword>
<keyword id="KW-0769">Symport</keyword>
<keyword id="KW-0812">Transmembrane</keyword>
<keyword id="KW-1133">Transmembrane helix</keyword>
<keyword id="KW-0813">Transport</keyword>
<comment type="function">
    <text evidence="1">Responsible for the transport of dicarboxylates such as succinate, fumarate, and malate from the periplasm across the membrane.</text>
</comment>
<comment type="subcellular location">
    <subcellularLocation>
        <location evidence="1">Cell inner membrane</location>
        <topology evidence="1">Multi-pass membrane protein</topology>
    </subcellularLocation>
</comment>
<comment type="similarity">
    <text evidence="1">Belongs to the dicarboxylate/amino acid:cation symporter (DAACS) (TC 2.A.23) family.</text>
</comment>
<sequence length="436" mass="45994">MTKQPFYKSLYVQVLVAIAIGIALGHWYPETAVAMKPFGDGFVKLIKMAIAPIIFCTVVTGIAGMQSMKSVGKTGGMALLYFEVVSTVALIIGLVVVNVVQPGAGMHVDPNTLDTSKIAAYAAAGEKQSTVDFLMNVIPGTVVGAFANGDILQVLFFSVLFGYALHRLGSYGKPVFEFIERVSHVMFNIINVIMKVAPIGAFGAMAFTIGAYGVGSLVQLGQLMLCFYITCILFVLIVLGGIARAHGFSILRFIRYIREELLIVLGTSSSESALPRMIDKMEKLGCNKSVVGLVIPTGYSFNLDGTSIYLTMAAVFIAQATDTPMDITHQITLLLVLLIASKGAAGVTGSGFIVLAATLSAVGHLPVAGLALILGIDRFMSEARALTNLVGNGVATVVVSKWCKQLDEGTLQRELAGEGNASSPASDIPVGGREAV</sequence>
<protein>
    <recommendedName>
        <fullName evidence="1">C4-dicarboxylate transport protein 2</fullName>
    </recommendedName>
</protein>
<gene>
    <name evidence="1" type="primary">dctA2</name>
    <name type="ordered locus">PA14_49130</name>
</gene>
<proteinExistence type="inferred from homology"/>
<evidence type="ECO:0000255" key="1">
    <source>
        <dbReference type="HAMAP-Rule" id="MF_01300"/>
    </source>
</evidence>
<evidence type="ECO:0000256" key="2">
    <source>
        <dbReference type="SAM" id="MobiDB-lite"/>
    </source>
</evidence>